<evidence type="ECO:0000255" key="1">
    <source>
        <dbReference type="HAMAP-Rule" id="MF_00176"/>
    </source>
</evidence>
<keyword id="KW-0030">Aminoacyl-tRNA synthetase</keyword>
<keyword id="KW-0067">ATP-binding</keyword>
<keyword id="KW-0963">Cytoplasm</keyword>
<keyword id="KW-0436">Ligase</keyword>
<keyword id="KW-0547">Nucleotide-binding</keyword>
<keyword id="KW-0648">Protein biosynthesis</keyword>
<comment type="function">
    <text evidence="1">Catalyzes the attachment of serine to tRNA(Ser). Is also able to aminoacylate tRNA(Sec) with serine, to form the misacylated tRNA L-seryl-tRNA(Sec), which will be further converted into selenocysteinyl-tRNA(Sec).</text>
</comment>
<comment type="catalytic activity">
    <reaction evidence="1">
        <text>tRNA(Ser) + L-serine + ATP = L-seryl-tRNA(Ser) + AMP + diphosphate + H(+)</text>
        <dbReference type="Rhea" id="RHEA:12292"/>
        <dbReference type="Rhea" id="RHEA-COMP:9669"/>
        <dbReference type="Rhea" id="RHEA-COMP:9703"/>
        <dbReference type="ChEBI" id="CHEBI:15378"/>
        <dbReference type="ChEBI" id="CHEBI:30616"/>
        <dbReference type="ChEBI" id="CHEBI:33019"/>
        <dbReference type="ChEBI" id="CHEBI:33384"/>
        <dbReference type="ChEBI" id="CHEBI:78442"/>
        <dbReference type="ChEBI" id="CHEBI:78533"/>
        <dbReference type="ChEBI" id="CHEBI:456215"/>
        <dbReference type="EC" id="6.1.1.11"/>
    </reaction>
</comment>
<comment type="catalytic activity">
    <reaction evidence="1">
        <text>tRNA(Sec) + L-serine + ATP = L-seryl-tRNA(Sec) + AMP + diphosphate + H(+)</text>
        <dbReference type="Rhea" id="RHEA:42580"/>
        <dbReference type="Rhea" id="RHEA-COMP:9742"/>
        <dbReference type="Rhea" id="RHEA-COMP:10128"/>
        <dbReference type="ChEBI" id="CHEBI:15378"/>
        <dbReference type="ChEBI" id="CHEBI:30616"/>
        <dbReference type="ChEBI" id="CHEBI:33019"/>
        <dbReference type="ChEBI" id="CHEBI:33384"/>
        <dbReference type="ChEBI" id="CHEBI:78442"/>
        <dbReference type="ChEBI" id="CHEBI:78533"/>
        <dbReference type="ChEBI" id="CHEBI:456215"/>
        <dbReference type="EC" id="6.1.1.11"/>
    </reaction>
</comment>
<comment type="pathway">
    <text evidence="1">Aminoacyl-tRNA biosynthesis; selenocysteinyl-tRNA(Sec) biosynthesis; L-seryl-tRNA(Sec) from L-serine and tRNA(Sec): step 1/1.</text>
</comment>
<comment type="subunit">
    <text evidence="1">Homodimer. The tRNA molecule binds across the dimer.</text>
</comment>
<comment type="subcellular location">
    <subcellularLocation>
        <location evidence="1">Cytoplasm</location>
    </subcellularLocation>
</comment>
<comment type="domain">
    <text evidence="1">Consists of two distinct domains, a catalytic core and a N-terminal extension that is involved in tRNA binding.</text>
</comment>
<comment type="similarity">
    <text evidence="1">Belongs to the class-II aminoacyl-tRNA synthetase family. Type-1 seryl-tRNA synthetase subfamily.</text>
</comment>
<name>SYS_COLP3</name>
<proteinExistence type="inferred from homology"/>
<gene>
    <name evidence="1" type="primary">serS</name>
    <name type="ordered locus">CPS_2755</name>
</gene>
<reference key="1">
    <citation type="journal article" date="2005" name="Proc. Natl. Acad. Sci. U.S.A.">
        <title>The psychrophilic lifestyle as revealed by the genome sequence of Colwellia psychrerythraea 34H through genomic and proteomic analyses.</title>
        <authorList>
            <person name="Methe B.A."/>
            <person name="Nelson K.E."/>
            <person name="Deming J.W."/>
            <person name="Momen B."/>
            <person name="Melamud E."/>
            <person name="Zhang X."/>
            <person name="Moult J."/>
            <person name="Madupu R."/>
            <person name="Nelson W.C."/>
            <person name="Dodson R.J."/>
            <person name="Brinkac L.M."/>
            <person name="Daugherty S.C."/>
            <person name="Durkin A.S."/>
            <person name="DeBoy R.T."/>
            <person name="Kolonay J.F."/>
            <person name="Sullivan S.A."/>
            <person name="Zhou L."/>
            <person name="Davidsen T.M."/>
            <person name="Wu M."/>
            <person name="Huston A.L."/>
            <person name="Lewis M."/>
            <person name="Weaver B."/>
            <person name="Weidman J.F."/>
            <person name="Khouri H."/>
            <person name="Utterback T.R."/>
            <person name="Feldblyum T.V."/>
            <person name="Fraser C.M."/>
        </authorList>
    </citation>
    <scope>NUCLEOTIDE SEQUENCE [LARGE SCALE GENOMIC DNA]</scope>
    <source>
        <strain>34H / ATCC BAA-681</strain>
    </source>
</reference>
<sequence length="426" mass="47469">MLDAKLLRTDLDNIAQQLTKRNFVLDTEALSALEELRKAIQVKTQELQNERNTRSKSIGQAKARGEDIAPLLAHVSQLGNDLDAAKTEQDEVLAKIDAIASAIPNLLDDSVPEGKDEDDNVEVKRWGTPREFDFEVKDHVDLGFSVDKGLDFESGAKLAGTRFVVMRGKIARLHRAIAQFMLDTHTEEHGYQEMYVPYLVNAASLYGTGQLPKFGEDLFHTDLSNKKFSLIPTSEVPLTNLVRDEIVDEDDLPIKMTAHTPCFRSEAGSGGRDIRGLIRQHQFDKVEMVQIVKPETSMTALDELTRHAEIILEKLELPYRTVQLCSGDVGFSAAKTFDLEVWLPAQDTYREISSCSNMGAFQARRMQARFRNNETNKPELLHTLNGSGLAVGRTLVAILENYQQADGSINVPTVLQPYMGGLTNIG</sequence>
<organism>
    <name type="scientific">Colwellia psychrerythraea (strain 34H / ATCC BAA-681)</name>
    <name type="common">Vibrio psychroerythus</name>
    <dbReference type="NCBI Taxonomy" id="167879"/>
    <lineage>
        <taxon>Bacteria</taxon>
        <taxon>Pseudomonadati</taxon>
        <taxon>Pseudomonadota</taxon>
        <taxon>Gammaproteobacteria</taxon>
        <taxon>Alteromonadales</taxon>
        <taxon>Colwelliaceae</taxon>
        <taxon>Colwellia</taxon>
    </lineage>
</organism>
<dbReference type="EC" id="6.1.1.11" evidence="1"/>
<dbReference type="EMBL" id="CP000083">
    <property type="protein sequence ID" value="AAZ26814.1"/>
    <property type="molecule type" value="Genomic_DNA"/>
</dbReference>
<dbReference type="RefSeq" id="WP_011043561.1">
    <property type="nucleotide sequence ID" value="NC_003910.7"/>
</dbReference>
<dbReference type="SMR" id="Q480Q2"/>
<dbReference type="STRING" id="167879.CPS_2755"/>
<dbReference type="KEGG" id="cps:CPS_2755"/>
<dbReference type="eggNOG" id="COG0172">
    <property type="taxonomic scope" value="Bacteria"/>
</dbReference>
<dbReference type="HOGENOM" id="CLU_023797_1_1_6"/>
<dbReference type="UniPathway" id="UPA00906">
    <property type="reaction ID" value="UER00895"/>
</dbReference>
<dbReference type="Proteomes" id="UP000000547">
    <property type="component" value="Chromosome"/>
</dbReference>
<dbReference type="GO" id="GO:0005737">
    <property type="term" value="C:cytoplasm"/>
    <property type="evidence" value="ECO:0007669"/>
    <property type="project" value="UniProtKB-SubCell"/>
</dbReference>
<dbReference type="GO" id="GO:0005524">
    <property type="term" value="F:ATP binding"/>
    <property type="evidence" value="ECO:0007669"/>
    <property type="project" value="UniProtKB-UniRule"/>
</dbReference>
<dbReference type="GO" id="GO:0004828">
    <property type="term" value="F:serine-tRNA ligase activity"/>
    <property type="evidence" value="ECO:0007669"/>
    <property type="project" value="UniProtKB-UniRule"/>
</dbReference>
<dbReference type="GO" id="GO:0016260">
    <property type="term" value="P:selenocysteine biosynthetic process"/>
    <property type="evidence" value="ECO:0007669"/>
    <property type="project" value="UniProtKB-UniRule"/>
</dbReference>
<dbReference type="GO" id="GO:0006434">
    <property type="term" value="P:seryl-tRNA aminoacylation"/>
    <property type="evidence" value="ECO:0007669"/>
    <property type="project" value="UniProtKB-UniRule"/>
</dbReference>
<dbReference type="CDD" id="cd00770">
    <property type="entry name" value="SerRS_core"/>
    <property type="match status" value="1"/>
</dbReference>
<dbReference type="Gene3D" id="3.30.930.10">
    <property type="entry name" value="Bira Bifunctional Protein, Domain 2"/>
    <property type="match status" value="1"/>
</dbReference>
<dbReference type="Gene3D" id="1.10.287.40">
    <property type="entry name" value="Serine-tRNA synthetase, tRNA binding domain"/>
    <property type="match status" value="1"/>
</dbReference>
<dbReference type="HAMAP" id="MF_00176">
    <property type="entry name" value="Ser_tRNA_synth_type1"/>
    <property type="match status" value="1"/>
</dbReference>
<dbReference type="InterPro" id="IPR002314">
    <property type="entry name" value="aa-tRNA-synt_IIb"/>
</dbReference>
<dbReference type="InterPro" id="IPR006195">
    <property type="entry name" value="aa-tRNA-synth_II"/>
</dbReference>
<dbReference type="InterPro" id="IPR045864">
    <property type="entry name" value="aa-tRNA-synth_II/BPL/LPL"/>
</dbReference>
<dbReference type="InterPro" id="IPR002317">
    <property type="entry name" value="Ser-tRNA-ligase_type_1"/>
</dbReference>
<dbReference type="InterPro" id="IPR015866">
    <property type="entry name" value="Ser-tRNA-synth_1_N"/>
</dbReference>
<dbReference type="InterPro" id="IPR042103">
    <property type="entry name" value="SerRS_1_N_sf"/>
</dbReference>
<dbReference type="InterPro" id="IPR033729">
    <property type="entry name" value="SerRS_core"/>
</dbReference>
<dbReference type="InterPro" id="IPR010978">
    <property type="entry name" value="tRNA-bd_arm"/>
</dbReference>
<dbReference type="NCBIfam" id="TIGR00414">
    <property type="entry name" value="serS"/>
    <property type="match status" value="1"/>
</dbReference>
<dbReference type="PANTHER" id="PTHR43697:SF1">
    <property type="entry name" value="SERINE--TRNA LIGASE"/>
    <property type="match status" value="1"/>
</dbReference>
<dbReference type="PANTHER" id="PTHR43697">
    <property type="entry name" value="SERYL-TRNA SYNTHETASE"/>
    <property type="match status" value="1"/>
</dbReference>
<dbReference type="Pfam" id="PF02403">
    <property type="entry name" value="Seryl_tRNA_N"/>
    <property type="match status" value="1"/>
</dbReference>
<dbReference type="Pfam" id="PF00587">
    <property type="entry name" value="tRNA-synt_2b"/>
    <property type="match status" value="1"/>
</dbReference>
<dbReference type="PIRSF" id="PIRSF001529">
    <property type="entry name" value="Ser-tRNA-synth_IIa"/>
    <property type="match status" value="1"/>
</dbReference>
<dbReference type="PRINTS" id="PR00981">
    <property type="entry name" value="TRNASYNTHSER"/>
</dbReference>
<dbReference type="SUPFAM" id="SSF55681">
    <property type="entry name" value="Class II aaRS and biotin synthetases"/>
    <property type="match status" value="1"/>
</dbReference>
<dbReference type="SUPFAM" id="SSF46589">
    <property type="entry name" value="tRNA-binding arm"/>
    <property type="match status" value="1"/>
</dbReference>
<dbReference type="PROSITE" id="PS50862">
    <property type="entry name" value="AA_TRNA_LIGASE_II"/>
    <property type="match status" value="1"/>
</dbReference>
<feature type="chain" id="PRO_1000019663" description="Serine--tRNA ligase">
    <location>
        <begin position="1"/>
        <end position="426"/>
    </location>
</feature>
<feature type="binding site" evidence="1">
    <location>
        <begin position="233"/>
        <end position="235"/>
    </location>
    <ligand>
        <name>L-serine</name>
        <dbReference type="ChEBI" id="CHEBI:33384"/>
    </ligand>
</feature>
<feature type="binding site" evidence="1">
    <location>
        <begin position="264"/>
        <end position="266"/>
    </location>
    <ligand>
        <name>ATP</name>
        <dbReference type="ChEBI" id="CHEBI:30616"/>
    </ligand>
</feature>
<feature type="binding site" evidence="1">
    <location>
        <position position="287"/>
    </location>
    <ligand>
        <name>L-serine</name>
        <dbReference type="ChEBI" id="CHEBI:33384"/>
    </ligand>
</feature>
<feature type="binding site" evidence="1">
    <location>
        <begin position="351"/>
        <end position="354"/>
    </location>
    <ligand>
        <name>ATP</name>
        <dbReference type="ChEBI" id="CHEBI:30616"/>
    </ligand>
</feature>
<feature type="binding site" evidence="1">
    <location>
        <position position="387"/>
    </location>
    <ligand>
        <name>L-serine</name>
        <dbReference type="ChEBI" id="CHEBI:33384"/>
    </ligand>
</feature>
<protein>
    <recommendedName>
        <fullName evidence="1">Serine--tRNA ligase</fullName>
        <ecNumber evidence="1">6.1.1.11</ecNumber>
    </recommendedName>
    <alternativeName>
        <fullName evidence="1">Seryl-tRNA synthetase</fullName>
        <shortName evidence="1">SerRS</shortName>
    </alternativeName>
    <alternativeName>
        <fullName evidence="1">Seryl-tRNA(Ser/Sec) synthetase</fullName>
    </alternativeName>
</protein>
<accession>Q480Q2</accession>